<accession>B4S5J9</accession>
<feature type="chain" id="PRO_1000131482" description="Phosphatidylserine decarboxylase beta chain" evidence="1">
    <location>
        <begin position="1"/>
        <end position="181"/>
    </location>
</feature>
<feature type="chain" id="PRO_1000131483" description="Phosphatidylserine decarboxylase alpha chain" evidence="1">
    <location>
        <begin position="182"/>
        <end position="217"/>
    </location>
</feature>
<feature type="active site" description="Schiff-base intermediate with substrate; via pyruvic acid" evidence="1">
    <location>
        <position position="182"/>
    </location>
</feature>
<feature type="site" description="Cleavage (non-hydrolytic); by autocatalysis" evidence="1">
    <location>
        <begin position="181"/>
        <end position="182"/>
    </location>
</feature>
<feature type="modified residue" description="Pyruvic acid (Ser); by autocatalysis" evidence="1">
    <location>
        <position position="182"/>
    </location>
</feature>
<protein>
    <recommendedName>
        <fullName evidence="1">Phosphatidylserine decarboxylase proenzyme</fullName>
        <ecNumber evidence="1">4.1.1.65</ecNumber>
    </recommendedName>
    <component>
        <recommendedName>
            <fullName evidence="1">Phosphatidylserine decarboxylase alpha chain</fullName>
        </recommendedName>
    </component>
    <component>
        <recommendedName>
            <fullName evidence="1">Phosphatidylserine decarboxylase beta chain</fullName>
        </recommendedName>
    </component>
</protein>
<keyword id="KW-1003">Cell membrane</keyword>
<keyword id="KW-0210">Decarboxylase</keyword>
<keyword id="KW-0444">Lipid biosynthesis</keyword>
<keyword id="KW-0443">Lipid metabolism</keyword>
<keyword id="KW-0456">Lyase</keyword>
<keyword id="KW-0472">Membrane</keyword>
<keyword id="KW-0594">Phospholipid biosynthesis</keyword>
<keyword id="KW-1208">Phospholipid metabolism</keyword>
<keyword id="KW-0670">Pyruvate</keyword>
<keyword id="KW-0865">Zymogen</keyword>
<gene>
    <name evidence="1" type="primary">psd</name>
    <name type="ordered locus">Paes_0540</name>
</gene>
<comment type="function">
    <text evidence="1">Catalyzes the formation of phosphatidylethanolamine (PtdEtn) from phosphatidylserine (PtdSer).</text>
</comment>
<comment type="catalytic activity">
    <reaction evidence="1">
        <text>a 1,2-diacyl-sn-glycero-3-phospho-L-serine + H(+) = a 1,2-diacyl-sn-glycero-3-phosphoethanolamine + CO2</text>
        <dbReference type="Rhea" id="RHEA:20828"/>
        <dbReference type="ChEBI" id="CHEBI:15378"/>
        <dbReference type="ChEBI" id="CHEBI:16526"/>
        <dbReference type="ChEBI" id="CHEBI:57262"/>
        <dbReference type="ChEBI" id="CHEBI:64612"/>
        <dbReference type="EC" id="4.1.1.65"/>
    </reaction>
</comment>
<comment type="cofactor">
    <cofactor evidence="1">
        <name>pyruvate</name>
        <dbReference type="ChEBI" id="CHEBI:15361"/>
    </cofactor>
    <text evidence="1">Binds 1 pyruvoyl group covalently per subunit.</text>
</comment>
<comment type="pathway">
    <text evidence="1">Phospholipid metabolism; phosphatidylethanolamine biosynthesis; phosphatidylethanolamine from CDP-diacylglycerol: step 2/2.</text>
</comment>
<comment type="subunit">
    <text evidence="1">Heterodimer of a large membrane-associated beta subunit and a small pyruvoyl-containing alpha subunit.</text>
</comment>
<comment type="subcellular location">
    <subcellularLocation>
        <location evidence="1">Cell membrane</location>
        <topology evidence="1">Peripheral membrane protein</topology>
    </subcellularLocation>
</comment>
<comment type="PTM">
    <text evidence="1">Is synthesized initially as an inactive proenzyme. Formation of the active enzyme involves a self-maturation process in which the active site pyruvoyl group is generated from an internal serine residue via an autocatalytic post-translational modification. Two non-identical subunits are generated from the proenzyme in this reaction, and the pyruvate is formed at the N-terminus of the alpha chain, which is derived from the carboxyl end of the proenzyme. The post-translation cleavage follows an unusual pathway, termed non-hydrolytic serinolysis, in which the side chain hydroxyl group of the serine supplies its oxygen atom to form the C-terminus of the beta chain, while the remainder of the serine residue undergoes an oxidative deamination to produce ammonia and the pyruvoyl prosthetic group on the alpha chain.</text>
</comment>
<comment type="similarity">
    <text evidence="1">Belongs to the phosphatidylserine decarboxylase family. PSD-A subfamily.</text>
</comment>
<name>PSD_PROA2</name>
<dbReference type="EC" id="4.1.1.65" evidence="1"/>
<dbReference type="EMBL" id="CP001108">
    <property type="protein sequence ID" value="ACF45596.1"/>
    <property type="molecule type" value="Genomic_DNA"/>
</dbReference>
<dbReference type="RefSeq" id="WP_012505133.1">
    <property type="nucleotide sequence ID" value="NC_011059.1"/>
</dbReference>
<dbReference type="SMR" id="B4S5J9"/>
<dbReference type="STRING" id="290512.Paes_0540"/>
<dbReference type="KEGG" id="paa:Paes_0540"/>
<dbReference type="eggNOG" id="COG0688">
    <property type="taxonomic scope" value="Bacteria"/>
</dbReference>
<dbReference type="HOGENOM" id="CLU_072492_2_0_10"/>
<dbReference type="UniPathway" id="UPA00558">
    <property type="reaction ID" value="UER00616"/>
</dbReference>
<dbReference type="Proteomes" id="UP000002725">
    <property type="component" value="Chromosome"/>
</dbReference>
<dbReference type="GO" id="GO:0005886">
    <property type="term" value="C:plasma membrane"/>
    <property type="evidence" value="ECO:0007669"/>
    <property type="project" value="UniProtKB-SubCell"/>
</dbReference>
<dbReference type="GO" id="GO:0004609">
    <property type="term" value="F:phosphatidylserine decarboxylase activity"/>
    <property type="evidence" value="ECO:0007669"/>
    <property type="project" value="UniProtKB-UniRule"/>
</dbReference>
<dbReference type="GO" id="GO:0006646">
    <property type="term" value="P:phosphatidylethanolamine biosynthetic process"/>
    <property type="evidence" value="ECO:0007669"/>
    <property type="project" value="UniProtKB-UniRule"/>
</dbReference>
<dbReference type="HAMAP" id="MF_00664">
    <property type="entry name" value="PS_decarb_PSD_A"/>
    <property type="match status" value="1"/>
</dbReference>
<dbReference type="InterPro" id="IPR003817">
    <property type="entry name" value="PS_Dcarbxylase"/>
</dbReference>
<dbReference type="InterPro" id="IPR033175">
    <property type="entry name" value="PSD-A"/>
</dbReference>
<dbReference type="NCBIfam" id="NF003678">
    <property type="entry name" value="PRK05305.1-2"/>
    <property type="match status" value="1"/>
</dbReference>
<dbReference type="NCBIfam" id="NF003682">
    <property type="entry name" value="PRK05305.2-2"/>
    <property type="match status" value="1"/>
</dbReference>
<dbReference type="NCBIfam" id="NF003685">
    <property type="entry name" value="PRK05305.2-5"/>
    <property type="match status" value="1"/>
</dbReference>
<dbReference type="PANTHER" id="PTHR35809">
    <property type="entry name" value="ARCHAETIDYLSERINE DECARBOXYLASE PROENZYME-RELATED"/>
    <property type="match status" value="1"/>
</dbReference>
<dbReference type="PANTHER" id="PTHR35809:SF1">
    <property type="entry name" value="ARCHAETIDYLSERINE DECARBOXYLASE PROENZYME-RELATED"/>
    <property type="match status" value="1"/>
</dbReference>
<dbReference type="Pfam" id="PF02666">
    <property type="entry name" value="PS_Dcarbxylase"/>
    <property type="match status" value="1"/>
</dbReference>
<evidence type="ECO:0000255" key="1">
    <source>
        <dbReference type="HAMAP-Rule" id="MF_00664"/>
    </source>
</evidence>
<proteinExistence type="inferred from homology"/>
<reference key="1">
    <citation type="submission" date="2008-06" db="EMBL/GenBank/DDBJ databases">
        <title>Complete sequence of chromosome of Prosthecochloris aestuarii DSM 271.</title>
        <authorList>
            <consortium name="US DOE Joint Genome Institute"/>
            <person name="Lucas S."/>
            <person name="Copeland A."/>
            <person name="Lapidus A."/>
            <person name="Glavina del Rio T."/>
            <person name="Dalin E."/>
            <person name="Tice H."/>
            <person name="Bruce D."/>
            <person name="Goodwin L."/>
            <person name="Pitluck S."/>
            <person name="Schmutz J."/>
            <person name="Larimer F."/>
            <person name="Land M."/>
            <person name="Hauser L."/>
            <person name="Kyrpides N."/>
            <person name="Anderson I."/>
            <person name="Liu Z."/>
            <person name="Li T."/>
            <person name="Zhao F."/>
            <person name="Overmann J."/>
            <person name="Bryant D.A."/>
            <person name="Richardson P."/>
        </authorList>
    </citation>
    <scope>NUCLEOTIDE SEQUENCE [LARGE SCALE GENOMIC DNA]</scope>
    <source>
        <strain>DSM 271 / SK 413</strain>
    </source>
</reference>
<organism>
    <name type="scientific">Prosthecochloris aestuarii (strain DSM 271 / SK 413)</name>
    <dbReference type="NCBI Taxonomy" id="290512"/>
    <lineage>
        <taxon>Bacteria</taxon>
        <taxon>Pseudomonadati</taxon>
        <taxon>Chlorobiota</taxon>
        <taxon>Chlorobiia</taxon>
        <taxon>Chlorobiales</taxon>
        <taxon>Chlorobiaceae</taxon>
        <taxon>Prosthecochloris</taxon>
    </lineage>
</organism>
<sequence>MFARYGRTTLTKTLLLCLAAFFCALLLPTLVQIPVMTLSLLMVLFSLYFFRDPSRTPVGNASAIVAPADGKVLLIRKTDHPFTGKNSTLVSIFMSPFNVHVNRIPINGRVTHLEYHPGKFLMAFDHNSMSDNERMDIGIENTQSKVFFSQVSGFLARRIVCHLTNDQNVRAGEKFGMIKFGSRLDIILPSQAEIALEEGKKTRAGETVVARLPNITT</sequence>